<sequence length="288" mass="32392">MESGDLKIFQAVARKGSISKAAESLHYVQSNVTNRIQQLERQLQTQLFYRTNRGMTLTPAGENLLKDADRILQLLHEAQKTAQEAGDPNGPLRIGSLETAAAVHLPQFFTEYCSRYPKVQLSLSTGDTHTLVQHILHYELDGAFVYGPVEYEDLEQVAVFQEELVLASNKREGSLQDLLREPILYFAAGCSHRRKIKNILKEEAVPAHKIIEFGTLEAIIGAVQAGMGVSFLPASAVRYFQNRKNLFLHELPEQFRDMNISFIYQSDLFLTSAFEELLNGLKALPNGR</sequence>
<keyword id="KW-0131">Cell cycle</keyword>
<keyword id="KW-0132">Cell division</keyword>
<keyword id="KW-0963">Cytoplasm</keyword>
<keyword id="KW-0238">DNA-binding</keyword>
<keyword id="KW-0717">Septation</keyword>
<keyword id="KW-0804">Transcription</keyword>
<keyword id="KW-0805">Transcription regulation</keyword>
<dbReference type="EMBL" id="CP000560">
    <property type="protein sequence ID" value="ABS74220.1"/>
    <property type="molecule type" value="Genomic_DNA"/>
</dbReference>
<dbReference type="RefSeq" id="WP_012117710.1">
    <property type="nucleotide sequence ID" value="NC_009725.2"/>
</dbReference>
<dbReference type="SMR" id="A7Z5E4"/>
<dbReference type="GeneID" id="93080987"/>
<dbReference type="KEGG" id="bay:RBAM_018580"/>
<dbReference type="HOGENOM" id="CLU_039613_6_1_9"/>
<dbReference type="Proteomes" id="UP000001120">
    <property type="component" value="Chromosome"/>
</dbReference>
<dbReference type="GO" id="GO:0005737">
    <property type="term" value="C:cytoplasm"/>
    <property type="evidence" value="ECO:0007669"/>
    <property type="project" value="UniProtKB-SubCell"/>
</dbReference>
<dbReference type="GO" id="GO:0003700">
    <property type="term" value="F:DNA-binding transcription factor activity"/>
    <property type="evidence" value="ECO:0007669"/>
    <property type="project" value="InterPro"/>
</dbReference>
<dbReference type="GO" id="GO:0000976">
    <property type="term" value="F:transcription cis-regulatory region binding"/>
    <property type="evidence" value="ECO:0007669"/>
    <property type="project" value="TreeGrafter"/>
</dbReference>
<dbReference type="GO" id="GO:0000917">
    <property type="term" value="P:division septum assembly"/>
    <property type="evidence" value="ECO:0007669"/>
    <property type="project" value="UniProtKB-KW"/>
</dbReference>
<dbReference type="CDD" id="cd08442">
    <property type="entry name" value="PBP2_YofA_SoxR_like"/>
    <property type="match status" value="1"/>
</dbReference>
<dbReference type="FunFam" id="1.10.10.10:FF:000001">
    <property type="entry name" value="LysR family transcriptional regulator"/>
    <property type="match status" value="1"/>
</dbReference>
<dbReference type="Gene3D" id="3.40.190.290">
    <property type="match status" value="1"/>
</dbReference>
<dbReference type="Gene3D" id="1.10.10.10">
    <property type="entry name" value="Winged helix-like DNA-binding domain superfamily/Winged helix DNA-binding domain"/>
    <property type="match status" value="1"/>
</dbReference>
<dbReference type="InterPro" id="IPR005119">
    <property type="entry name" value="LysR_subst-bd"/>
</dbReference>
<dbReference type="InterPro" id="IPR000847">
    <property type="entry name" value="Tscrpt_reg_HTH_LysR"/>
</dbReference>
<dbReference type="InterPro" id="IPR036388">
    <property type="entry name" value="WH-like_DNA-bd_sf"/>
</dbReference>
<dbReference type="InterPro" id="IPR036390">
    <property type="entry name" value="WH_DNA-bd_sf"/>
</dbReference>
<dbReference type="PANTHER" id="PTHR30126">
    <property type="entry name" value="HTH-TYPE TRANSCRIPTIONAL REGULATOR"/>
    <property type="match status" value="1"/>
</dbReference>
<dbReference type="PANTHER" id="PTHR30126:SF40">
    <property type="entry name" value="HTH-TYPE TRANSCRIPTIONAL REGULATOR GLTR"/>
    <property type="match status" value="1"/>
</dbReference>
<dbReference type="Pfam" id="PF00126">
    <property type="entry name" value="HTH_1"/>
    <property type="match status" value="1"/>
</dbReference>
<dbReference type="Pfam" id="PF03466">
    <property type="entry name" value="LysR_substrate"/>
    <property type="match status" value="1"/>
</dbReference>
<dbReference type="PRINTS" id="PR00039">
    <property type="entry name" value="HTHLYSR"/>
</dbReference>
<dbReference type="SUPFAM" id="SSF53850">
    <property type="entry name" value="Periplasmic binding protein-like II"/>
    <property type="match status" value="1"/>
</dbReference>
<dbReference type="SUPFAM" id="SSF46785">
    <property type="entry name" value="Winged helix' DNA-binding domain"/>
    <property type="match status" value="1"/>
</dbReference>
<dbReference type="PROSITE" id="PS50931">
    <property type="entry name" value="HTH_LYSR"/>
    <property type="match status" value="1"/>
</dbReference>
<feature type="chain" id="PRO_0000337972" description="HTH-type transcriptional regulator YofA">
    <location>
        <begin position="1"/>
        <end position="288"/>
    </location>
</feature>
<feature type="domain" description="HTH lysR-type" evidence="2">
    <location>
        <begin position="1"/>
        <end position="58"/>
    </location>
</feature>
<feature type="DNA-binding region" description="H-T-H motif" evidence="2">
    <location>
        <begin position="18"/>
        <end position="37"/>
    </location>
</feature>
<name>YOFA_BACVZ</name>
<comment type="function">
    <text evidence="1">Regulates expression of the cell division protein ftsW, and is essential for cell viability during stationary phase.</text>
</comment>
<comment type="subcellular location">
    <subcellularLocation>
        <location evidence="1">Cytoplasm</location>
    </subcellularLocation>
</comment>
<comment type="similarity">
    <text evidence="3">Belongs to the LysR transcriptional regulatory family.</text>
</comment>
<organism>
    <name type="scientific">Bacillus velezensis (strain DSM 23117 / BGSC 10A6 / LMG 26770 / FZB42)</name>
    <name type="common">Bacillus amyloliquefaciens subsp. plantarum</name>
    <dbReference type="NCBI Taxonomy" id="326423"/>
    <lineage>
        <taxon>Bacteria</taxon>
        <taxon>Bacillati</taxon>
        <taxon>Bacillota</taxon>
        <taxon>Bacilli</taxon>
        <taxon>Bacillales</taxon>
        <taxon>Bacillaceae</taxon>
        <taxon>Bacillus</taxon>
        <taxon>Bacillus amyloliquefaciens group</taxon>
    </lineage>
</organism>
<gene>
    <name type="primary">yofA</name>
    <name type="ordered locus">RBAM_018580</name>
</gene>
<evidence type="ECO:0000250" key="1"/>
<evidence type="ECO:0000255" key="2">
    <source>
        <dbReference type="PROSITE-ProRule" id="PRU00253"/>
    </source>
</evidence>
<evidence type="ECO:0000305" key="3"/>
<reference key="1">
    <citation type="journal article" date="2007" name="Nat. Biotechnol.">
        <title>Comparative analysis of the complete genome sequence of the plant growth-promoting bacterium Bacillus amyloliquefaciens FZB42.</title>
        <authorList>
            <person name="Chen X.H."/>
            <person name="Koumoutsi A."/>
            <person name="Scholz R."/>
            <person name="Eisenreich A."/>
            <person name="Schneider K."/>
            <person name="Heinemeyer I."/>
            <person name="Morgenstern B."/>
            <person name="Voss B."/>
            <person name="Hess W.R."/>
            <person name="Reva O."/>
            <person name="Junge H."/>
            <person name="Voigt B."/>
            <person name="Jungblut P.R."/>
            <person name="Vater J."/>
            <person name="Suessmuth R."/>
            <person name="Liesegang H."/>
            <person name="Strittmatter A."/>
            <person name="Gottschalk G."/>
            <person name="Borriss R."/>
        </authorList>
    </citation>
    <scope>NUCLEOTIDE SEQUENCE [LARGE SCALE GENOMIC DNA]</scope>
    <source>
        <strain>DSM 23117 / BGSC 10A6 / LMG 26770 / FZB42</strain>
    </source>
</reference>
<proteinExistence type="inferred from homology"/>
<protein>
    <recommendedName>
        <fullName>HTH-type transcriptional regulator YofA</fullName>
    </recommendedName>
</protein>
<accession>A7Z5E4</accession>